<name>YQGF_MYCCT</name>
<feature type="chain" id="PRO_0000257550" description="Putative pre-16S rRNA nuclease">
    <location>
        <begin position="1"/>
        <end position="143"/>
    </location>
</feature>
<protein>
    <recommendedName>
        <fullName evidence="1">Putative pre-16S rRNA nuclease</fullName>
        <ecNumber evidence="1">3.1.-.-</ecNumber>
    </recommendedName>
</protein>
<accession>Q2SSR1</accession>
<organism>
    <name type="scientific">Mycoplasma capricolum subsp. capricolum (strain California kid / ATCC 27343 / NCTC 10154)</name>
    <dbReference type="NCBI Taxonomy" id="340047"/>
    <lineage>
        <taxon>Bacteria</taxon>
        <taxon>Bacillati</taxon>
        <taxon>Mycoplasmatota</taxon>
        <taxon>Mollicutes</taxon>
        <taxon>Mycoplasmataceae</taxon>
        <taxon>Mycoplasma</taxon>
    </lineage>
</organism>
<keyword id="KW-0963">Cytoplasm</keyword>
<keyword id="KW-0378">Hydrolase</keyword>
<keyword id="KW-0540">Nuclease</keyword>
<keyword id="KW-0690">Ribosome biogenesis</keyword>
<proteinExistence type="inferred from homology"/>
<dbReference type="EC" id="3.1.-.-" evidence="1"/>
<dbReference type="EMBL" id="CP000123">
    <property type="protein sequence ID" value="ABC01537.1"/>
    <property type="molecule type" value="Genomic_DNA"/>
</dbReference>
<dbReference type="RefSeq" id="WP_011387103.1">
    <property type="nucleotide sequence ID" value="NC_007633.1"/>
</dbReference>
<dbReference type="SMR" id="Q2SSR1"/>
<dbReference type="GeneID" id="23778832"/>
<dbReference type="KEGG" id="mcp:MCAP_0215"/>
<dbReference type="HOGENOM" id="CLU_098240_2_0_14"/>
<dbReference type="PhylomeDB" id="Q2SSR1"/>
<dbReference type="Proteomes" id="UP000001928">
    <property type="component" value="Chromosome"/>
</dbReference>
<dbReference type="GO" id="GO:0005829">
    <property type="term" value="C:cytosol"/>
    <property type="evidence" value="ECO:0007669"/>
    <property type="project" value="TreeGrafter"/>
</dbReference>
<dbReference type="GO" id="GO:0004518">
    <property type="term" value="F:nuclease activity"/>
    <property type="evidence" value="ECO:0007669"/>
    <property type="project" value="UniProtKB-KW"/>
</dbReference>
<dbReference type="GO" id="GO:0000967">
    <property type="term" value="P:rRNA 5'-end processing"/>
    <property type="evidence" value="ECO:0007669"/>
    <property type="project" value="UniProtKB-UniRule"/>
</dbReference>
<dbReference type="CDD" id="cd16964">
    <property type="entry name" value="YqgF"/>
    <property type="match status" value="1"/>
</dbReference>
<dbReference type="Gene3D" id="3.30.420.140">
    <property type="entry name" value="YqgF/RNase H-like domain"/>
    <property type="match status" value="1"/>
</dbReference>
<dbReference type="HAMAP" id="MF_00651">
    <property type="entry name" value="Nuclease_YqgF"/>
    <property type="match status" value="1"/>
</dbReference>
<dbReference type="InterPro" id="IPR012337">
    <property type="entry name" value="RNaseH-like_sf"/>
</dbReference>
<dbReference type="InterPro" id="IPR005227">
    <property type="entry name" value="YqgF"/>
</dbReference>
<dbReference type="InterPro" id="IPR006641">
    <property type="entry name" value="YqgF/RNaseH-like_dom"/>
</dbReference>
<dbReference type="InterPro" id="IPR037027">
    <property type="entry name" value="YqgF/RNaseH-like_dom_sf"/>
</dbReference>
<dbReference type="NCBIfam" id="TIGR00250">
    <property type="entry name" value="RNAse_H_YqgF"/>
    <property type="match status" value="1"/>
</dbReference>
<dbReference type="PANTHER" id="PTHR33317">
    <property type="entry name" value="POLYNUCLEOTIDYL TRANSFERASE, RIBONUCLEASE H-LIKE SUPERFAMILY PROTEIN"/>
    <property type="match status" value="1"/>
</dbReference>
<dbReference type="PANTHER" id="PTHR33317:SF4">
    <property type="entry name" value="POLYNUCLEOTIDYL TRANSFERASE, RIBONUCLEASE H-LIKE SUPERFAMILY PROTEIN"/>
    <property type="match status" value="1"/>
</dbReference>
<dbReference type="Pfam" id="PF03652">
    <property type="entry name" value="RuvX"/>
    <property type="match status" value="1"/>
</dbReference>
<dbReference type="SMART" id="SM00732">
    <property type="entry name" value="YqgFc"/>
    <property type="match status" value="1"/>
</dbReference>
<dbReference type="SUPFAM" id="SSF53098">
    <property type="entry name" value="Ribonuclease H-like"/>
    <property type="match status" value="1"/>
</dbReference>
<evidence type="ECO:0000255" key="1">
    <source>
        <dbReference type="HAMAP-Rule" id="MF_00651"/>
    </source>
</evidence>
<reference key="1">
    <citation type="submission" date="2005-09" db="EMBL/GenBank/DDBJ databases">
        <authorList>
            <person name="Glass J.I."/>
            <person name="Lartigue C."/>
            <person name="Pfannkoch C."/>
            <person name="Baden-Tillson H."/>
            <person name="Smith H.O."/>
            <person name="Venter J.C."/>
            <person name="Roske K."/>
            <person name="Wise K.S."/>
            <person name="Calcutt M.J."/>
            <person name="Nelson W.C."/>
            <person name="Nierman W.C."/>
        </authorList>
    </citation>
    <scope>NUCLEOTIDE SEQUENCE [LARGE SCALE GENOMIC DNA]</scope>
    <source>
        <strain>California kid / ATCC 27343 / NCTC 10154</strain>
    </source>
</reference>
<comment type="function">
    <text evidence="1">Could be a nuclease involved in processing of the 5'-end of pre-16S rRNA.</text>
</comment>
<comment type="subcellular location">
    <subcellularLocation>
        <location evidence="1">Cytoplasm</location>
    </subcellularLocation>
</comment>
<comment type="similarity">
    <text evidence="1">Belongs to the YqgF nuclease family.</text>
</comment>
<gene>
    <name type="ordered locus">MCAP_0215</name>
</gene>
<sequence length="143" mass="16546">MTQSIIAFDIGSKTIGLAYSSGVIASSLDTIRFEEYNFDQGLKQLELYLKKYNPSIIVVGYPKNMNNTIGERAEMVDYVIEMFLDMYKSFNKDQIIKVDERRTTKIAKNILIQANLTREKQKKYKDSLAAQLILELYLESRKL</sequence>